<name>6PGL_SCHPO</name>
<feature type="chain" id="PRO_0000090086" description="Probable 6-phosphogluconolactonase">
    <location>
        <begin position="1"/>
        <end position="257"/>
    </location>
</feature>
<reference key="1">
    <citation type="journal article" date="2002" name="Nature">
        <title>The genome sequence of Schizosaccharomyces pombe.</title>
        <authorList>
            <person name="Wood V."/>
            <person name="Gwilliam R."/>
            <person name="Rajandream M.A."/>
            <person name="Lyne M.H."/>
            <person name="Lyne R."/>
            <person name="Stewart A."/>
            <person name="Sgouros J.G."/>
            <person name="Peat N."/>
            <person name="Hayles J."/>
            <person name="Baker S.G."/>
            <person name="Basham D."/>
            <person name="Bowman S."/>
            <person name="Brooks K."/>
            <person name="Brown D."/>
            <person name="Brown S."/>
            <person name="Chillingworth T."/>
            <person name="Churcher C.M."/>
            <person name="Collins M."/>
            <person name="Connor R."/>
            <person name="Cronin A."/>
            <person name="Davis P."/>
            <person name="Feltwell T."/>
            <person name="Fraser A."/>
            <person name="Gentles S."/>
            <person name="Goble A."/>
            <person name="Hamlin N."/>
            <person name="Harris D.E."/>
            <person name="Hidalgo J."/>
            <person name="Hodgson G."/>
            <person name="Holroyd S."/>
            <person name="Hornsby T."/>
            <person name="Howarth S."/>
            <person name="Huckle E.J."/>
            <person name="Hunt S."/>
            <person name="Jagels K."/>
            <person name="James K.D."/>
            <person name="Jones L."/>
            <person name="Jones M."/>
            <person name="Leather S."/>
            <person name="McDonald S."/>
            <person name="McLean J."/>
            <person name="Mooney P."/>
            <person name="Moule S."/>
            <person name="Mungall K.L."/>
            <person name="Murphy L.D."/>
            <person name="Niblett D."/>
            <person name="Odell C."/>
            <person name="Oliver K."/>
            <person name="O'Neil S."/>
            <person name="Pearson D."/>
            <person name="Quail M.A."/>
            <person name="Rabbinowitsch E."/>
            <person name="Rutherford K.M."/>
            <person name="Rutter S."/>
            <person name="Saunders D."/>
            <person name="Seeger K."/>
            <person name="Sharp S."/>
            <person name="Skelton J."/>
            <person name="Simmonds M.N."/>
            <person name="Squares R."/>
            <person name="Squares S."/>
            <person name="Stevens K."/>
            <person name="Taylor K."/>
            <person name="Taylor R.G."/>
            <person name="Tivey A."/>
            <person name="Walsh S.V."/>
            <person name="Warren T."/>
            <person name="Whitehead S."/>
            <person name="Woodward J.R."/>
            <person name="Volckaert G."/>
            <person name="Aert R."/>
            <person name="Robben J."/>
            <person name="Grymonprez B."/>
            <person name="Weltjens I."/>
            <person name="Vanstreels E."/>
            <person name="Rieger M."/>
            <person name="Schaefer M."/>
            <person name="Mueller-Auer S."/>
            <person name="Gabel C."/>
            <person name="Fuchs M."/>
            <person name="Duesterhoeft A."/>
            <person name="Fritzc C."/>
            <person name="Holzer E."/>
            <person name="Moestl D."/>
            <person name="Hilbert H."/>
            <person name="Borzym K."/>
            <person name="Langer I."/>
            <person name="Beck A."/>
            <person name="Lehrach H."/>
            <person name="Reinhardt R."/>
            <person name="Pohl T.M."/>
            <person name="Eger P."/>
            <person name="Zimmermann W."/>
            <person name="Wedler H."/>
            <person name="Wambutt R."/>
            <person name="Purnelle B."/>
            <person name="Goffeau A."/>
            <person name="Cadieu E."/>
            <person name="Dreano S."/>
            <person name="Gloux S."/>
            <person name="Lelaure V."/>
            <person name="Mottier S."/>
            <person name="Galibert F."/>
            <person name="Aves S.J."/>
            <person name="Xiang Z."/>
            <person name="Hunt C."/>
            <person name="Moore K."/>
            <person name="Hurst S.M."/>
            <person name="Lucas M."/>
            <person name="Rochet M."/>
            <person name="Gaillardin C."/>
            <person name="Tallada V.A."/>
            <person name="Garzon A."/>
            <person name="Thode G."/>
            <person name="Daga R.R."/>
            <person name="Cruzado L."/>
            <person name="Jimenez J."/>
            <person name="Sanchez M."/>
            <person name="del Rey F."/>
            <person name="Benito J."/>
            <person name="Dominguez A."/>
            <person name="Revuelta J.L."/>
            <person name="Moreno S."/>
            <person name="Armstrong J."/>
            <person name="Forsburg S.L."/>
            <person name="Cerutti L."/>
            <person name="Lowe T."/>
            <person name="McCombie W.R."/>
            <person name="Paulsen I."/>
            <person name="Potashkin J."/>
            <person name="Shpakovski G.V."/>
            <person name="Ussery D."/>
            <person name="Barrell B.G."/>
            <person name="Nurse P."/>
        </authorList>
    </citation>
    <scope>NUCLEOTIDE SEQUENCE [LARGE SCALE GENOMIC DNA]</scope>
    <source>
        <strain>972 / ATCC 24843</strain>
    </source>
</reference>
<protein>
    <recommendedName>
        <fullName>Probable 6-phosphogluconolactonase</fullName>
        <shortName>6PGL</shortName>
        <ecNumber>3.1.1.31</ecNumber>
    </recommendedName>
</protein>
<comment type="function">
    <text evidence="1">Hydrolysis of 6-phosphogluconolactone to 6-phosphogluconate.</text>
</comment>
<comment type="catalytic activity">
    <reaction>
        <text>6-phospho-D-glucono-1,5-lactone + H2O = 6-phospho-D-gluconate + H(+)</text>
        <dbReference type="Rhea" id="RHEA:12556"/>
        <dbReference type="ChEBI" id="CHEBI:15377"/>
        <dbReference type="ChEBI" id="CHEBI:15378"/>
        <dbReference type="ChEBI" id="CHEBI:57955"/>
        <dbReference type="ChEBI" id="CHEBI:58759"/>
        <dbReference type="EC" id="3.1.1.31"/>
    </reaction>
</comment>
<comment type="pathway">
    <text>Carbohydrate degradation; pentose phosphate pathway; D-ribulose 5-phosphate from D-glucose 6-phosphate (oxidative stage): step 2/3.</text>
</comment>
<comment type="similarity">
    <text evidence="2">Belongs to the glucosamine/galactosamine-6-phosphate isomerase family. 6-phosphogluconolactonase subfamily.</text>
</comment>
<evidence type="ECO:0000250" key="1"/>
<evidence type="ECO:0000305" key="2"/>
<organism>
    <name type="scientific">Schizosaccharomyces pombe (strain 972 / ATCC 24843)</name>
    <name type="common">Fission yeast</name>
    <dbReference type="NCBI Taxonomy" id="284812"/>
    <lineage>
        <taxon>Eukaryota</taxon>
        <taxon>Fungi</taxon>
        <taxon>Dikarya</taxon>
        <taxon>Ascomycota</taxon>
        <taxon>Taphrinomycotina</taxon>
        <taxon>Schizosaccharomycetes</taxon>
        <taxon>Schizosaccharomycetales</taxon>
        <taxon>Schizosaccharomycetaceae</taxon>
        <taxon>Schizosaccharomyces</taxon>
    </lineage>
</organism>
<accession>O74455</accession>
<proteinExistence type="inferred from homology"/>
<sequence>MSVYSFSDVSLVAKALGAFVKEKSEASIKRHGVFTLALSGGSLPKVLAEGLAQQRGIEFSKWEVFFADERIVPLDDENSNYALCKKLIFDKFEGFDPKKIHTINPELLKENPIDPQNVADEYEKQLVHVFANSSTVKVPVFDLLLLGCGPDGHTCSLFPDHEVLQEDVAWVAPVTDSPKPPKDRITLTLPVVTHAQAIAFVTTGAGKKDILPIVIEDFTSKLPSALITRNNLTRTSWFVDDEASANLERSSLKVFPQ</sequence>
<dbReference type="EC" id="3.1.1.31"/>
<dbReference type="EMBL" id="CU329672">
    <property type="protein sequence ID" value="CAA20749.1"/>
    <property type="molecule type" value="Genomic_DNA"/>
</dbReference>
<dbReference type="PIR" id="T41100">
    <property type="entry name" value="T41100"/>
</dbReference>
<dbReference type="SMR" id="O74455"/>
<dbReference type="BioGRID" id="275499">
    <property type="interactions" value="180"/>
</dbReference>
<dbReference type="FunCoup" id="O74455">
    <property type="interactions" value="584"/>
</dbReference>
<dbReference type="STRING" id="284812.O74455"/>
<dbReference type="iPTMnet" id="O74455"/>
<dbReference type="PaxDb" id="4896-SPCC16C4.10.1"/>
<dbReference type="EnsemblFungi" id="SPCC16C4.10.1">
    <property type="protein sequence ID" value="SPCC16C4.10.1:pep"/>
    <property type="gene ID" value="SPCC16C4.10"/>
</dbReference>
<dbReference type="KEGG" id="spo:2538922"/>
<dbReference type="PomBase" id="SPCC16C4.10"/>
<dbReference type="VEuPathDB" id="FungiDB:SPCC16C4.10"/>
<dbReference type="eggNOG" id="KOG3147">
    <property type="taxonomic scope" value="Eukaryota"/>
</dbReference>
<dbReference type="HOGENOM" id="CLU_053947_0_1_1"/>
<dbReference type="InParanoid" id="O74455"/>
<dbReference type="OMA" id="IAMSQST"/>
<dbReference type="PhylomeDB" id="O74455"/>
<dbReference type="Reactome" id="R-SPO-71336">
    <property type="pathway name" value="Pentose phosphate pathway"/>
</dbReference>
<dbReference type="UniPathway" id="UPA00115">
    <property type="reaction ID" value="UER00409"/>
</dbReference>
<dbReference type="PRO" id="PR:O74455"/>
<dbReference type="Proteomes" id="UP000002485">
    <property type="component" value="Chromosome III"/>
</dbReference>
<dbReference type="GO" id="GO:0005829">
    <property type="term" value="C:cytosol"/>
    <property type="evidence" value="ECO:0007005"/>
    <property type="project" value="PomBase"/>
</dbReference>
<dbReference type="GO" id="GO:0005634">
    <property type="term" value="C:nucleus"/>
    <property type="evidence" value="ECO:0007005"/>
    <property type="project" value="PomBase"/>
</dbReference>
<dbReference type="GO" id="GO:0017057">
    <property type="term" value="F:6-phosphogluconolactonase activity"/>
    <property type="evidence" value="ECO:0000269"/>
    <property type="project" value="PomBase"/>
</dbReference>
<dbReference type="GO" id="GO:0005975">
    <property type="term" value="P:carbohydrate metabolic process"/>
    <property type="evidence" value="ECO:0007669"/>
    <property type="project" value="InterPro"/>
</dbReference>
<dbReference type="GO" id="GO:0009051">
    <property type="term" value="P:pentose-phosphate shunt, oxidative branch"/>
    <property type="evidence" value="ECO:0000269"/>
    <property type="project" value="PomBase"/>
</dbReference>
<dbReference type="CDD" id="cd01400">
    <property type="entry name" value="6PGL"/>
    <property type="match status" value="1"/>
</dbReference>
<dbReference type="FunFam" id="3.40.50.1360:FF:000005">
    <property type="entry name" value="6-phosphogluconolactonase"/>
    <property type="match status" value="1"/>
</dbReference>
<dbReference type="Gene3D" id="3.40.50.1360">
    <property type="match status" value="1"/>
</dbReference>
<dbReference type="InterPro" id="IPR005900">
    <property type="entry name" value="6-phosphogluconolactonase_DevB"/>
</dbReference>
<dbReference type="InterPro" id="IPR006148">
    <property type="entry name" value="Glc/Gal-6P_isomerase"/>
</dbReference>
<dbReference type="InterPro" id="IPR037171">
    <property type="entry name" value="NagB/RpiA_transferase-like"/>
</dbReference>
<dbReference type="InterPro" id="IPR039104">
    <property type="entry name" value="PGLS"/>
</dbReference>
<dbReference type="NCBIfam" id="TIGR01198">
    <property type="entry name" value="pgl"/>
    <property type="match status" value="1"/>
</dbReference>
<dbReference type="PANTHER" id="PTHR11054">
    <property type="entry name" value="6-PHOSPHOGLUCONOLACTONASE"/>
    <property type="match status" value="1"/>
</dbReference>
<dbReference type="PANTHER" id="PTHR11054:SF0">
    <property type="entry name" value="6-PHOSPHOGLUCONOLACTONASE"/>
    <property type="match status" value="1"/>
</dbReference>
<dbReference type="Pfam" id="PF01182">
    <property type="entry name" value="Glucosamine_iso"/>
    <property type="match status" value="1"/>
</dbReference>
<dbReference type="SUPFAM" id="SSF100950">
    <property type="entry name" value="NagB/RpiA/CoA transferase-like"/>
    <property type="match status" value="1"/>
</dbReference>
<keyword id="KW-0378">Hydrolase</keyword>
<keyword id="KW-1185">Reference proteome</keyword>
<gene>
    <name type="ORF">SPCC16C4.10</name>
</gene>